<dbReference type="EMBL" id="CP000490">
    <property type="protein sequence ID" value="ABL71780.1"/>
    <property type="molecule type" value="Genomic_DNA"/>
</dbReference>
<dbReference type="RefSeq" id="WP_011749949.1">
    <property type="nucleotide sequence ID" value="NC_008687.1"/>
</dbReference>
<dbReference type="SMR" id="A1B8D6"/>
<dbReference type="STRING" id="318586.Pden_3713"/>
<dbReference type="EnsemblBacteria" id="ABL71780">
    <property type="protein sequence ID" value="ABL71780"/>
    <property type="gene ID" value="Pden_3713"/>
</dbReference>
<dbReference type="GeneID" id="93453371"/>
<dbReference type="KEGG" id="pde:Pden_3713"/>
<dbReference type="eggNOG" id="COG1492">
    <property type="taxonomic scope" value="Bacteria"/>
</dbReference>
<dbReference type="HOGENOM" id="CLU_019250_2_2_5"/>
<dbReference type="OrthoDB" id="9808302at2"/>
<dbReference type="UniPathway" id="UPA00148"/>
<dbReference type="Proteomes" id="UP000000361">
    <property type="component" value="Chromosome 2"/>
</dbReference>
<dbReference type="GO" id="GO:0015420">
    <property type="term" value="F:ABC-type vitamin B12 transporter activity"/>
    <property type="evidence" value="ECO:0007669"/>
    <property type="project" value="UniProtKB-UniRule"/>
</dbReference>
<dbReference type="GO" id="GO:0003824">
    <property type="term" value="F:catalytic activity"/>
    <property type="evidence" value="ECO:0007669"/>
    <property type="project" value="InterPro"/>
</dbReference>
<dbReference type="GO" id="GO:0009236">
    <property type="term" value="P:cobalamin biosynthetic process"/>
    <property type="evidence" value="ECO:0007669"/>
    <property type="project" value="UniProtKB-UniRule"/>
</dbReference>
<dbReference type="CDD" id="cd01750">
    <property type="entry name" value="GATase1_CobQ"/>
    <property type="match status" value="1"/>
</dbReference>
<dbReference type="Gene3D" id="3.40.50.880">
    <property type="match status" value="1"/>
</dbReference>
<dbReference type="Gene3D" id="3.40.50.300">
    <property type="entry name" value="P-loop containing nucleotide triphosphate hydrolases"/>
    <property type="match status" value="1"/>
</dbReference>
<dbReference type="HAMAP" id="MF_00028">
    <property type="entry name" value="CobQ"/>
    <property type="match status" value="1"/>
</dbReference>
<dbReference type="InterPro" id="IPR029062">
    <property type="entry name" value="Class_I_gatase-like"/>
</dbReference>
<dbReference type="InterPro" id="IPR002586">
    <property type="entry name" value="CobQ/CobB/MinD/ParA_Nub-bd_dom"/>
</dbReference>
<dbReference type="InterPro" id="IPR033949">
    <property type="entry name" value="CobQ_GATase1"/>
</dbReference>
<dbReference type="InterPro" id="IPR004459">
    <property type="entry name" value="CobQ_synth"/>
</dbReference>
<dbReference type="InterPro" id="IPR011698">
    <property type="entry name" value="GATase_3"/>
</dbReference>
<dbReference type="InterPro" id="IPR027417">
    <property type="entry name" value="P-loop_NTPase"/>
</dbReference>
<dbReference type="NCBIfam" id="TIGR00313">
    <property type="entry name" value="cobQ"/>
    <property type="match status" value="1"/>
</dbReference>
<dbReference type="NCBIfam" id="NF001989">
    <property type="entry name" value="PRK00784.1"/>
    <property type="match status" value="1"/>
</dbReference>
<dbReference type="PANTHER" id="PTHR21343:SF1">
    <property type="entry name" value="COBYRIC ACID SYNTHASE"/>
    <property type="match status" value="1"/>
</dbReference>
<dbReference type="PANTHER" id="PTHR21343">
    <property type="entry name" value="DETHIOBIOTIN SYNTHETASE"/>
    <property type="match status" value="1"/>
</dbReference>
<dbReference type="Pfam" id="PF01656">
    <property type="entry name" value="CbiA"/>
    <property type="match status" value="1"/>
</dbReference>
<dbReference type="Pfam" id="PF07685">
    <property type="entry name" value="GATase_3"/>
    <property type="match status" value="1"/>
</dbReference>
<dbReference type="SUPFAM" id="SSF52317">
    <property type="entry name" value="Class I glutamine amidotransferase-like"/>
    <property type="match status" value="1"/>
</dbReference>
<dbReference type="SUPFAM" id="SSF52540">
    <property type="entry name" value="P-loop containing nucleoside triphosphate hydrolases"/>
    <property type="match status" value="1"/>
</dbReference>
<dbReference type="PROSITE" id="PS51274">
    <property type="entry name" value="GATASE_COBBQ"/>
    <property type="match status" value="1"/>
</dbReference>
<gene>
    <name evidence="1" type="primary">cobQ</name>
    <name type="ordered locus">Pden_3713</name>
</gene>
<sequence>MGALMIQGTGSNVGKSLLVAGLCRAARRRGIDVAPFKPQNMSNNAAVTPDGGEIGRAQALQARAAGLAPSVHMNPVLLKPETDRAAQVVVQGRAATRAAAADYGALKARLMGAVLDSFARLRTTHELVLVEGAGSPAEVNLRARDIANMGFARAADVPVVLAGDIDRGGVIAQIVGTQAVIDPADAAMIRGFVINRFRGDPSLFDAGRRFIVERTGWPDLGLVPWFPDAVRLPAEDAVDLRRASGGGGLHIACPMLSRIANFDDLDPLAAEPAVRLSMVPPGHALPGDADLVILPGTKSTRGDLAFLREQGWDIDLAAHLRRGGRVLGICGGYQMLGRMIHDPEGHDGSPGSTPGLGLLDIETRMAPEKRLTRIAGRALGQPVEGYEIHMGRSEGPDCARPFAHIPEPDGATSPDGRVAGTYLHGLFSGDGFRAAWLGQFGAASALDYGAGVDEVLDRLAGHLEAHLDIDRLFALAR</sequence>
<name>COBQ_PARDP</name>
<organism>
    <name type="scientific">Paracoccus denitrificans (strain Pd 1222)</name>
    <dbReference type="NCBI Taxonomy" id="318586"/>
    <lineage>
        <taxon>Bacteria</taxon>
        <taxon>Pseudomonadati</taxon>
        <taxon>Pseudomonadota</taxon>
        <taxon>Alphaproteobacteria</taxon>
        <taxon>Rhodobacterales</taxon>
        <taxon>Paracoccaceae</taxon>
        <taxon>Paracoccus</taxon>
    </lineage>
</organism>
<reference key="1">
    <citation type="submission" date="2006-12" db="EMBL/GenBank/DDBJ databases">
        <title>Complete sequence of chromosome 2 of Paracoccus denitrificans PD1222.</title>
        <authorList>
            <person name="Copeland A."/>
            <person name="Lucas S."/>
            <person name="Lapidus A."/>
            <person name="Barry K."/>
            <person name="Detter J.C."/>
            <person name="Glavina del Rio T."/>
            <person name="Hammon N."/>
            <person name="Israni S."/>
            <person name="Dalin E."/>
            <person name="Tice H."/>
            <person name="Pitluck S."/>
            <person name="Munk A.C."/>
            <person name="Brettin T."/>
            <person name="Bruce D."/>
            <person name="Han C."/>
            <person name="Tapia R."/>
            <person name="Gilna P."/>
            <person name="Schmutz J."/>
            <person name="Larimer F."/>
            <person name="Land M."/>
            <person name="Hauser L."/>
            <person name="Kyrpides N."/>
            <person name="Lykidis A."/>
            <person name="Spiro S."/>
            <person name="Richardson D.J."/>
            <person name="Moir J.W.B."/>
            <person name="Ferguson S.J."/>
            <person name="van Spanning R.J.M."/>
            <person name="Richardson P."/>
        </authorList>
    </citation>
    <scope>NUCLEOTIDE SEQUENCE [LARGE SCALE GENOMIC DNA]</scope>
    <source>
        <strain>Pd 1222</strain>
    </source>
</reference>
<proteinExistence type="inferred from homology"/>
<keyword id="KW-0169">Cobalamin biosynthesis</keyword>
<keyword id="KW-0315">Glutamine amidotransferase</keyword>
<keyword id="KW-1185">Reference proteome</keyword>
<protein>
    <recommendedName>
        <fullName evidence="1">Cobyric acid synthase</fullName>
    </recommendedName>
</protein>
<feature type="chain" id="PRO_0000332358" description="Cobyric acid synthase">
    <location>
        <begin position="1"/>
        <end position="477"/>
    </location>
</feature>
<feature type="domain" description="GATase cobBQ-type" evidence="1">
    <location>
        <begin position="248"/>
        <end position="432"/>
    </location>
</feature>
<feature type="active site" description="Nucleophile" evidence="1">
    <location>
        <position position="330"/>
    </location>
</feature>
<feature type="active site" evidence="1">
    <location>
        <position position="424"/>
    </location>
</feature>
<evidence type="ECO:0000255" key="1">
    <source>
        <dbReference type="HAMAP-Rule" id="MF_00028"/>
    </source>
</evidence>
<comment type="function">
    <text evidence="1">Catalyzes amidations at positions B, D, E, and G on adenosylcobyrinic A,C-diamide. NH(2) groups are provided by glutamine, and one molecule of ATP is hydrogenolyzed for each amidation.</text>
</comment>
<comment type="pathway">
    <text evidence="1">Cofactor biosynthesis; adenosylcobalamin biosynthesis.</text>
</comment>
<comment type="similarity">
    <text evidence="1">Belongs to the CobB/CobQ family. CobQ subfamily.</text>
</comment>
<accession>A1B8D6</accession>